<feature type="chain" id="PRO_1000099984" description="Uroporphyrinogen decarboxylase">
    <location>
        <begin position="1"/>
        <end position="336"/>
    </location>
</feature>
<feature type="binding site" evidence="1">
    <location>
        <begin position="24"/>
        <end position="28"/>
    </location>
    <ligand>
        <name>substrate</name>
    </ligand>
</feature>
<feature type="binding site" evidence="1">
    <location>
        <position position="73"/>
    </location>
    <ligand>
        <name>substrate</name>
    </ligand>
</feature>
<feature type="binding site" evidence="1">
    <location>
        <position position="142"/>
    </location>
    <ligand>
        <name>substrate</name>
    </ligand>
</feature>
<feature type="binding site" evidence="1">
    <location>
        <position position="197"/>
    </location>
    <ligand>
        <name>substrate</name>
    </ligand>
</feature>
<feature type="binding site" evidence="1">
    <location>
        <position position="312"/>
    </location>
    <ligand>
        <name>substrate</name>
    </ligand>
</feature>
<feature type="site" description="Transition state stabilizer" evidence="1">
    <location>
        <position position="73"/>
    </location>
</feature>
<keyword id="KW-0963">Cytoplasm</keyword>
<keyword id="KW-0210">Decarboxylase</keyword>
<keyword id="KW-0456">Lyase</keyword>
<keyword id="KW-0627">Porphyrin biosynthesis</keyword>
<sequence length="336" mass="37703">MPMTGFYETISPRDQQRPPIWFLRQVGRYIPQYQELKRNRSLKDFFLDTESIVEATLLGPSLLGVDAAIVFADILSILEGFSVDYRFAPGPEVSYSPHEPLIFTKDPQETFSFLLEAIQQLTKRLTVPLIAFAASPFTLASYLIEGGASRDYPKTIAFLYQYPDRFKALLDEITLGTATYLQMQVQAGAAAIQLFESSSLRLPPHLFAKYVVAPNTKLIRQIKQTGNPPISLFCRCFYQEFLSLYAIGADTLHPDYHVELPEVYRQIHSPGSIQGNFDPALLLLPQDALIAHLEAYLAPLKQQSHYIFNLGHGILPQTPIENVQAVVSCLTSISTS</sequence>
<name>DCUP_CHLTB</name>
<reference key="1">
    <citation type="journal article" date="2008" name="Genome Res.">
        <title>Chlamydia trachomatis: genome sequence analysis of lymphogranuloma venereum isolates.</title>
        <authorList>
            <person name="Thomson N.R."/>
            <person name="Holden M.T.G."/>
            <person name="Carder C."/>
            <person name="Lennard N."/>
            <person name="Lockey S.J."/>
            <person name="Marsh P."/>
            <person name="Skipp P."/>
            <person name="O'Connor C.D."/>
            <person name="Goodhead I."/>
            <person name="Norbertzcak H."/>
            <person name="Harris B."/>
            <person name="Ormond D."/>
            <person name="Rance R."/>
            <person name="Quail M.A."/>
            <person name="Parkhill J."/>
            <person name="Stephens R.S."/>
            <person name="Clarke I.N."/>
        </authorList>
    </citation>
    <scope>NUCLEOTIDE SEQUENCE [LARGE SCALE GENOMIC DNA]</scope>
    <source>
        <strain>UCH-1/proctitis</strain>
    </source>
</reference>
<organism>
    <name type="scientific">Chlamydia trachomatis serovar L2b (strain UCH-1/proctitis)</name>
    <dbReference type="NCBI Taxonomy" id="471473"/>
    <lineage>
        <taxon>Bacteria</taxon>
        <taxon>Pseudomonadati</taxon>
        <taxon>Chlamydiota</taxon>
        <taxon>Chlamydiia</taxon>
        <taxon>Chlamydiales</taxon>
        <taxon>Chlamydiaceae</taxon>
        <taxon>Chlamydia/Chlamydophila group</taxon>
        <taxon>Chlamydia</taxon>
    </lineage>
</organism>
<proteinExistence type="inferred from homology"/>
<accession>B0BAK2</accession>
<comment type="function">
    <text evidence="1">Catalyzes the decarboxylation of four acetate groups of uroporphyrinogen-III to yield coproporphyrinogen-III.</text>
</comment>
<comment type="catalytic activity">
    <reaction evidence="1">
        <text>uroporphyrinogen III + 4 H(+) = coproporphyrinogen III + 4 CO2</text>
        <dbReference type="Rhea" id="RHEA:19865"/>
        <dbReference type="ChEBI" id="CHEBI:15378"/>
        <dbReference type="ChEBI" id="CHEBI:16526"/>
        <dbReference type="ChEBI" id="CHEBI:57308"/>
        <dbReference type="ChEBI" id="CHEBI:57309"/>
        <dbReference type="EC" id="4.1.1.37"/>
    </reaction>
</comment>
<comment type="pathway">
    <text evidence="1">Porphyrin-containing compound metabolism; protoporphyrin-IX biosynthesis; coproporphyrinogen-III from 5-aminolevulinate: step 4/4.</text>
</comment>
<comment type="subunit">
    <text evidence="1">Homodimer.</text>
</comment>
<comment type="subcellular location">
    <subcellularLocation>
        <location evidence="1">Cytoplasm</location>
    </subcellularLocation>
</comment>
<comment type="similarity">
    <text evidence="1">Belongs to the uroporphyrinogen decarboxylase family.</text>
</comment>
<dbReference type="EC" id="4.1.1.37" evidence="1"/>
<dbReference type="EMBL" id="AM884177">
    <property type="protein sequence ID" value="CAP06514.1"/>
    <property type="molecule type" value="Genomic_DNA"/>
</dbReference>
<dbReference type="RefSeq" id="WP_009872125.1">
    <property type="nucleotide sequence ID" value="NC_010280.2"/>
</dbReference>
<dbReference type="SMR" id="B0BAK2"/>
<dbReference type="KEGG" id="ctl:CTLon_0116"/>
<dbReference type="HOGENOM" id="CLU_040933_0_0_0"/>
<dbReference type="UniPathway" id="UPA00251">
    <property type="reaction ID" value="UER00321"/>
</dbReference>
<dbReference type="Proteomes" id="UP001154401">
    <property type="component" value="Chromosome"/>
</dbReference>
<dbReference type="GO" id="GO:0005829">
    <property type="term" value="C:cytosol"/>
    <property type="evidence" value="ECO:0007669"/>
    <property type="project" value="TreeGrafter"/>
</dbReference>
<dbReference type="GO" id="GO:0004853">
    <property type="term" value="F:uroporphyrinogen decarboxylase activity"/>
    <property type="evidence" value="ECO:0007669"/>
    <property type="project" value="UniProtKB-UniRule"/>
</dbReference>
<dbReference type="GO" id="GO:0006782">
    <property type="term" value="P:protoporphyrinogen IX biosynthetic process"/>
    <property type="evidence" value="ECO:0007669"/>
    <property type="project" value="UniProtKB-UniRule"/>
</dbReference>
<dbReference type="CDD" id="cd00717">
    <property type="entry name" value="URO-D"/>
    <property type="match status" value="1"/>
</dbReference>
<dbReference type="Gene3D" id="3.20.20.210">
    <property type="match status" value="1"/>
</dbReference>
<dbReference type="HAMAP" id="MF_00218">
    <property type="entry name" value="URO_D"/>
    <property type="match status" value="1"/>
</dbReference>
<dbReference type="InterPro" id="IPR038071">
    <property type="entry name" value="UROD/MetE-like_sf"/>
</dbReference>
<dbReference type="InterPro" id="IPR006361">
    <property type="entry name" value="Uroporphyrinogen_deCO2ase_HemE"/>
</dbReference>
<dbReference type="InterPro" id="IPR000257">
    <property type="entry name" value="Uroporphyrinogen_deCOase"/>
</dbReference>
<dbReference type="NCBIfam" id="TIGR01464">
    <property type="entry name" value="hemE"/>
    <property type="match status" value="1"/>
</dbReference>
<dbReference type="PANTHER" id="PTHR21091">
    <property type="entry name" value="METHYLTETRAHYDROFOLATE:HOMOCYSTEINE METHYLTRANSFERASE RELATED"/>
    <property type="match status" value="1"/>
</dbReference>
<dbReference type="PANTHER" id="PTHR21091:SF169">
    <property type="entry name" value="UROPORPHYRINOGEN DECARBOXYLASE"/>
    <property type="match status" value="1"/>
</dbReference>
<dbReference type="Pfam" id="PF01208">
    <property type="entry name" value="URO-D"/>
    <property type="match status" value="1"/>
</dbReference>
<dbReference type="SUPFAM" id="SSF51726">
    <property type="entry name" value="UROD/MetE-like"/>
    <property type="match status" value="1"/>
</dbReference>
<dbReference type="PROSITE" id="PS00906">
    <property type="entry name" value="UROD_1"/>
    <property type="match status" value="1"/>
</dbReference>
<dbReference type="PROSITE" id="PS00907">
    <property type="entry name" value="UROD_2"/>
    <property type="match status" value="1"/>
</dbReference>
<gene>
    <name evidence="1" type="primary">hemE</name>
    <name type="ordered locus">CTLon_0116</name>
</gene>
<protein>
    <recommendedName>
        <fullName evidence="1">Uroporphyrinogen decarboxylase</fullName>
        <shortName evidence="1">UPD</shortName>
        <shortName evidence="1">URO-D</shortName>
        <ecNumber evidence="1">4.1.1.37</ecNumber>
    </recommendedName>
</protein>
<evidence type="ECO:0000255" key="1">
    <source>
        <dbReference type="HAMAP-Rule" id="MF_00218"/>
    </source>
</evidence>